<comment type="catalytic activity">
    <reaction evidence="1">
        <text>a quinone + NADH + H(+) = a quinol + NAD(+)</text>
        <dbReference type="Rhea" id="RHEA:46160"/>
        <dbReference type="ChEBI" id="CHEBI:15378"/>
        <dbReference type="ChEBI" id="CHEBI:24646"/>
        <dbReference type="ChEBI" id="CHEBI:57540"/>
        <dbReference type="ChEBI" id="CHEBI:57945"/>
        <dbReference type="ChEBI" id="CHEBI:132124"/>
        <dbReference type="EC" id="1.6.5.2"/>
    </reaction>
</comment>
<comment type="catalytic activity">
    <reaction evidence="1">
        <text>a quinone + NADPH + H(+) = a quinol + NADP(+)</text>
        <dbReference type="Rhea" id="RHEA:46164"/>
        <dbReference type="ChEBI" id="CHEBI:15378"/>
        <dbReference type="ChEBI" id="CHEBI:24646"/>
        <dbReference type="ChEBI" id="CHEBI:57783"/>
        <dbReference type="ChEBI" id="CHEBI:58349"/>
        <dbReference type="ChEBI" id="CHEBI:132124"/>
        <dbReference type="EC" id="1.6.5.2"/>
    </reaction>
</comment>
<comment type="cofactor">
    <cofactor evidence="1">
        <name>FMN</name>
        <dbReference type="ChEBI" id="CHEBI:58210"/>
    </cofactor>
    <text evidence="1">Binds 1 FMN per monomer.</text>
</comment>
<comment type="similarity">
    <text evidence="1">Belongs to the WrbA family.</text>
</comment>
<keyword id="KW-0285">Flavoprotein</keyword>
<keyword id="KW-0288">FMN</keyword>
<keyword id="KW-0520">NAD</keyword>
<keyword id="KW-0521">NADP</keyword>
<keyword id="KW-0547">Nucleotide-binding</keyword>
<keyword id="KW-0560">Oxidoreductase</keyword>
<keyword id="KW-1185">Reference proteome</keyword>
<protein>
    <recommendedName>
        <fullName evidence="1">NAD(P)H dehydrogenase (quinone)</fullName>
        <ecNumber evidence="1">1.6.5.2</ecNumber>
    </recommendedName>
    <alternativeName>
        <fullName>Flavoprotein WrbA</fullName>
    </alternativeName>
    <alternativeName>
        <fullName evidence="1">NAD(P)H:quinone oxidoreductase</fullName>
        <shortName evidence="1">NQO</shortName>
    </alternativeName>
</protein>
<name>NQOR_ECO45</name>
<evidence type="ECO:0000255" key="1">
    <source>
        <dbReference type="HAMAP-Rule" id="MF_01017"/>
    </source>
</evidence>
<dbReference type="EC" id="1.6.5.2" evidence="1"/>
<dbReference type="EMBL" id="CU928161">
    <property type="protein sequence ID" value="CAR02349.1"/>
    <property type="molecule type" value="Genomic_DNA"/>
</dbReference>
<dbReference type="SMR" id="B7MIE9"/>
<dbReference type="KEGG" id="ecz:ECS88_1018"/>
<dbReference type="HOGENOM" id="CLU_051402_0_2_6"/>
<dbReference type="Proteomes" id="UP000000747">
    <property type="component" value="Chromosome"/>
</dbReference>
<dbReference type="GO" id="GO:0016020">
    <property type="term" value="C:membrane"/>
    <property type="evidence" value="ECO:0007669"/>
    <property type="project" value="TreeGrafter"/>
</dbReference>
<dbReference type="GO" id="GO:0050660">
    <property type="term" value="F:flavin adenine dinucleotide binding"/>
    <property type="evidence" value="ECO:0007669"/>
    <property type="project" value="UniProtKB-UniRule"/>
</dbReference>
<dbReference type="GO" id="GO:0010181">
    <property type="term" value="F:FMN binding"/>
    <property type="evidence" value="ECO:0007669"/>
    <property type="project" value="InterPro"/>
</dbReference>
<dbReference type="GO" id="GO:0051287">
    <property type="term" value="F:NAD binding"/>
    <property type="evidence" value="ECO:0007669"/>
    <property type="project" value="UniProtKB-UniRule"/>
</dbReference>
<dbReference type="GO" id="GO:0050136">
    <property type="term" value="F:NADH:ubiquinone reductase (non-electrogenic) activity"/>
    <property type="evidence" value="ECO:0007669"/>
    <property type="project" value="RHEA"/>
</dbReference>
<dbReference type="GO" id="GO:0050661">
    <property type="term" value="F:NADP binding"/>
    <property type="evidence" value="ECO:0007669"/>
    <property type="project" value="UniProtKB-UniRule"/>
</dbReference>
<dbReference type="GO" id="GO:0008753">
    <property type="term" value="F:NADPH dehydrogenase (quinone) activity"/>
    <property type="evidence" value="ECO:0007669"/>
    <property type="project" value="RHEA"/>
</dbReference>
<dbReference type="FunFam" id="3.40.50.360:FF:000004">
    <property type="entry name" value="NAD(P)H dehydrogenase (quinone)"/>
    <property type="match status" value="1"/>
</dbReference>
<dbReference type="Gene3D" id="3.40.50.360">
    <property type="match status" value="1"/>
</dbReference>
<dbReference type="HAMAP" id="MF_01017">
    <property type="entry name" value="NQOR"/>
    <property type="match status" value="1"/>
</dbReference>
<dbReference type="InterPro" id="IPR008254">
    <property type="entry name" value="Flavodoxin/NO_synth"/>
</dbReference>
<dbReference type="InterPro" id="IPR029039">
    <property type="entry name" value="Flavoprotein-like_sf"/>
</dbReference>
<dbReference type="InterPro" id="IPR010089">
    <property type="entry name" value="Flavoprotein_WrbA-like"/>
</dbReference>
<dbReference type="InterPro" id="IPR005025">
    <property type="entry name" value="FMN_Rdtase-like_dom"/>
</dbReference>
<dbReference type="InterPro" id="IPR037513">
    <property type="entry name" value="NQO"/>
</dbReference>
<dbReference type="NCBIfam" id="TIGR01755">
    <property type="entry name" value="flav_wrbA"/>
    <property type="match status" value="1"/>
</dbReference>
<dbReference type="NCBIfam" id="NF002999">
    <property type="entry name" value="PRK03767.1"/>
    <property type="match status" value="1"/>
</dbReference>
<dbReference type="PANTHER" id="PTHR30546">
    <property type="entry name" value="FLAVODOXIN-RELATED PROTEIN WRBA-RELATED"/>
    <property type="match status" value="1"/>
</dbReference>
<dbReference type="PANTHER" id="PTHR30546:SF23">
    <property type="entry name" value="FLAVOPROTEIN-LIKE PROTEIN YCP4-RELATED"/>
    <property type="match status" value="1"/>
</dbReference>
<dbReference type="Pfam" id="PF03358">
    <property type="entry name" value="FMN_red"/>
    <property type="match status" value="1"/>
</dbReference>
<dbReference type="SUPFAM" id="SSF52218">
    <property type="entry name" value="Flavoproteins"/>
    <property type="match status" value="1"/>
</dbReference>
<dbReference type="PROSITE" id="PS50902">
    <property type="entry name" value="FLAVODOXIN_LIKE"/>
    <property type="match status" value="1"/>
</dbReference>
<reference key="1">
    <citation type="journal article" date="2009" name="PLoS Genet.">
        <title>Organised genome dynamics in the Escherichia coli species results in highly diverse adaptive paths.</title>
        <authorList>
            <person name="Touchon M."/>
            <person name="Hoede C."/>
            <person name="Tenaillon O."/>
            <person name="Barbe V."/>
            <person name="Baeriswyl S."/>
            <person name="Bidet P."/>
            <person name="Bingen E."/>
            <person name="Bonacorsi S."/>
            <person name="Bouchier C."/>
            <person name="Bouvet O."/>
            <person name="Calteau A."/>
            <person name="Chiapello H."/>
            <person name="Clermont O."/>
            <person name="Cruveiller S."/>
            <person name="Danchin A."/>
            <person name="Diard M."/>
            <person name="Dossat C."/>
            <person name="Karoui M.E."/>
            <person name="Frapy E."/>
            <person name="Garry L."/>
            <person name="Ghigo J.M."/>
            <person name="Gilles A.M."/>
            <person name="Johnson J."/>
            <person name="Le Bouguenec C."/>
            <person name="Lescat M."/>
            <person name="Mangenot S."/>
            <person name="Martinez-Jehanne V."/>
            <person name="Matic I."/>
            <person name="Nassif X."/>
            <person name="Oztas S."/>
            <person name="Petit M.A."/>
            <person name="Pichon C."/>
            <person name="Rouy Z."/>
            <person name="Ruf C.S."/>
            <person name="Schneider D."/>
            <person name="Tourret J."/>
            <person name="Vacherie B."/>
            <person name="Vallenet D."/>
            <person name="Medigue C."/>
            <person name="Rocha E.P.C."/>
            <person name="Denamur E."/>
        </authorList>
    </citation>
    <scope>NUCLEOTIDE SEQUENCE [LARGE SCALE GENOMIC DNA]</scope>
    <source>
        <strain>S88 / ExPEC</strain>
    </source>
</reference>
<sequence length="198" mass="20846">MAKVLVLYYSMYGHIETMARAVAEGASKVDGAEVVVKRVPETMPPQLFEKAGGKTQTAPVATPQELADYDAIIFGTPTRFGNMSGQMRTFLDQTGGLWASGALYGKLASVFSSTGTGGGQEQTITSTWTTLAHHGMVIVPIGYAAQELFDVSQVRGGTPYGATTIAGGDGSRQPSQEELSIARYQGEYVAGLAVKLNG</sequence>
<organism>
    <name type="scientific">Escherichia coli O45:K1 (strain S88 / ExPEC)</name>
    <dbReference type="NCBI Taxonomy" id="585035"/>
    <lineage>
        <taxon>Bacteria</taxon>
        <taxon>Pseudomonadati</taxon>
        <taxon>Pseudomonadota</taxon>
        <taxon>Gammaproteobacteria</taxon>
        <taxon>Enterobacterales</taxon>
        <taxon>Enterobacteriaceae</taxon>
        <taxon>Escherichia</taxon>
    </lineage>
</organism>
<gene>
    <name type="ordered locus">ECS88_1018</name>
</gene>
<accession>B7MIE9</accession>
<feature type="chain" id="PRO_1000200627" description="NAD(P)H dehydrogenase (quinone)">
    <location>
        <begin position="1"/>
        <end position="198"/>
    </location>
</feature>
<feature type="domain" description="Flavodoxin-like" evidence="1">
    <location>
        <begin position="4"/>
        <end position="189"/>
    </location>
</feature>
<feature type="binding site" evidence="1">
    <location>
        <begin position="10"/>
        <end position="15"/>
    </location>
    <ligand>
        <name>FMN</name>
        <dbReference type="ChEBI" id="CHEBI:58210"/>
    </ligand>
</feature>
<feature type="binding site" evidence="1">
    <location>
        <position position="12"/>
    </location>
    <ligand>
        <name>NAD(+)</name>
        <dbReference type="ChEBI" id="CHEBI:57540"/>
    </ligand>
</feature>
<feature type="binding site" evidence="1">
    <location>
        <begin position="78"/>
        <end position="80"/>
    </location>
    <ligand>
        <name>FMN</name>
        <dbReference type="ChEBI" id="CHEBI:58210"/>
    </ligand>
</feature>
<feature type="binding site" evidence="1">
    <location>
        <position position="98"/>
    </location>
    <ligand>
        <name>substrate</name>
    </ligand>
</feature>
<feature type="binding site" evidence="1">
    <location>
        <begin position="113"/>
        <end position="118"/>
    </location>
    <ligand>
        <name>FMN</name>
        <dbReference type="ChEBI" id="CHEBI:58210"/>
    </ligand>
</feature>
<feature type="binding site" evidence="1">
    <location>
        <position position="133"/>
    </location>
    <ligand>
        <name>FMN</name>
        <dbReference type="ChEBI" id="CHEBI:58210"/>
    </ligand>
</feature>
<proteinExistence type="inferred from homology"/>